<gene>
    <name type="primary">mazF5</name>
    <name evidence="4" type="synonym">mazF-mt5</name>
    <name type="ordered locus">Rv1942c</name>
</gene>
<feature type="chain" id="PRO_0000406307" description="Probable endoribonuclease MazF5">
    <location>
        <begin position="1"/>
        <end position="109"/>
    </location>
</feature>
<accession>P95272</accession>
<accession>L0TB16</accession>
<sequence length="109" mass="11820">MTALPARGEVWWCEMAEIGRRPVVVLSRDAAIPRLRRALVAPCTTTIRGLASEVVLEPGSDPIPRRSAVNLDSVESVSVAVLVNRLGRLADIRMRAICTALEVAVDCSR</sequence>
<name>MAZF5_MYCTU</name>
<comment type="function">
    <text evidence="1 3">Toxic component of a type II toxin-antitoxin (TA) system. Upon expression in M.smegmatis inhibits colony formation. Its toxic effect is neutralized by coexpression with cognate antitoxin MazE5 (PubMed:20011113). Probably an endoribonuclease (By similarity).</text>
</comment>
<comment type="subunit">
    <text evidence="1">Forms a complex with cognate antitoxin MazE5.</text>
</comment>
<comment type="induction">
    <text evidence="2">Repressed by Mce3R.</text>
</comment>
<comment type="similarity">
    <text evidence="6">Belongs to the PemK/MazF family.</text>
</comment>
<proteinExistence type="evidence at protein level"/>
<keyword id="KW-0255">Endonuclease</keyword>
<keyword id="KW-0378">Hydrolase</keyword>
<keyword id="KW-0540">Nuclease</keyword>
<keyword id="KW-1185">Reference proteome</keyword>
<keyword id="KW-1277">Toxin-antitoxin system</keyword>
<protein>
    <recommendedName>
        <fullName evidence="6">Probable endoribonuclease MazF5</fullName>
        <ecNumber>3.1.-.-</ecNumber>
    </recommendedName>
    <alternativeName>
        <fullName evidence="5">Toxin MazF5</fullName>
    </alternativeName>
</protein>
<organism>
    <name type="scientific">Mycobacterium tuberculosis (strain ATCC 25618 / H37Rv)</name>
    <dbReference type="NCBI Taxonomy" id="83332"/>
    <lineage>
        <taxon>Bacteria</taxon>
        <taxon>Bacillati</taxon>
        <taxon>Actinomycetota</taxon>
        <taxon>Actinomycetes</taxon>
        <taxon>Mycobacteriales</taxon>
        <taxon>Mycobacteriaceae</taxon>
        <taxon>Mycobacterium</taxon>
        <taxon>Mycobacterium tuberculosis complex</taxon>
    </lineage>
</organism>
<dbReference type="EC" id="3.1.-.-"/>
<dbReference type="EMBL" id="AL123456">
    <property type="protein sequence ID" value="CCP44709.1"/>
    <property type="molecule type" value="Genomic_DNA"/>
</dbReference>
<dbReference type="PIR" id="B70637">
    <property type="entry name" value="B70637"/>
</dbReference>
<dbReference type="RefSeq" id="NP_216458.1">
    <property type="nucleotide sequence ID" value="NC_000962.3"/>
</dbReference>
<dbReference type="RefSeq" id="WP_003409778.1">
    <property type="nucleotide sequence ID" value="NZ_NVQJ01000034.1"/>
</dbReference>
<dbReference type="SMR" id="P95272"/>
<dbReference type="STRING" id="83332.Rv1942c"/>
<dbReference type="PaxDb" id="83332-Rv1942c"/>
<dbReference type="DNASU" id="885606"/>
<dbReference type="GeneID" id="885606"/>
<dbReference type="KEGG" id="mtu:Rv1942c"/>
<dbReference type="KEGG" id="mtv:RVBD_1942c"/>
<dbReference type="TubercuList" id="Rv1942c"/>
<dbReference type="eggNOG" id="COG2337">
    <property type="taxonomic scope" value="Bacteria"/>
</dbReference>
<dbReference type="InParanoid" id="P95272"/>
<dbReference type="OrthoDB" id="5419693at2"/>
<dbReference type="PhylomeDB" id="P95272"/>
<dbReference type="Proteomes" id="UP000001584">
    <property type="component" value="Chromosome"/>
</dbReference>
<dbReference type="GO" id="GO:0003677">
    <property type="term" value="F:DNA binding"/>
    <property type="evidence" value="ECO:0007669"/>
    <property type="project" value="InterPro"/>
</dbReference>
<dbReference type="GO" id="GO:0004521">
    <property type="term" value="F:RNA endonuclease activity"/>
    <property type="evidence" value="ECO:0000318"/>
    <property type="project" value="GO_Central"/>
</dbReference>
<dbReference type="GO" id="GO:0006402">
    <property type="term" value="P:mRNA catabolic process"/>
    <property type="evidence" value="ECO:0000318"/>
    <property type="project" value="GO_Central"/>
</dbReference>
<dbReference type="GO" id="GO:0045926">
    <property type="term" value="P:negative regulation of growth"/>
    <property type="evidence" value="ECO:0000315"/>
    <property type="project" value="MTBBASE"/>
</dbReference>
<dbReference type="GO" id="GO:0016075">
    <property type="term" value="P:rRNA catabolic process"/>
    <property type="evidence" value="ECO:0000318"/>
    <property type="project" value="GO_Central"/>
</dbReference>
<dbReference type="FunFam" id="2.30.30.110:FF:000002">
    <property type="entry name" value="Toxin MazF5"/>
    <property type="match status" value="1"/>
</dbReference>
<dbReference type="Gene3D" id="2.30.30.110">
    <property type="match status" value="1"/>
</dbReference>
<dbReference type="InterPro" id="IPR003477">
    <property type="entry name" value="PemK-like"/>
</dbReference>
<dbReference type="InterPro" id="IPR011067">
    <property type="entry name" value="Plasmid_toxin/cell-grow_inhib"/>
</dbReference>
<dbReference type="PANTHER" id="PTHR33988:SF2">
    <property type="entry name" value="ENDORIBONUCLEASE MAZF"/>
    <property type="match status" value="1"/>
</dbReference>
<dbReference type="PANTHER" id="PTHR33988">
    <property type="entry name" value="ENDORIBONUCLEASE MAZF-RELATED"/>
    <property type="match status" value="1"/>
</dbReference>
<dbReference type="Pfam" id="PF02452">
    <property type="entry name" value="PemK_toxin"/>
    <property type="match status" value="1"/>
</dbReference>
<dbReference type="SUPFAM" id="SSF50118">
    <property type="entry name" value="Cell growth inhibitor/plasmid maintenance toxic component"/>
    <property type="match status" value="1"/>
</dbReference>
<reference key="1">
    <citation type="journal article" date="1998" name="Nature">
        <title>Deciphering the biology of Mycobacterium tuberculosis from the complete genome sequence.</title>
        <authorList>
            <person name="Cole S.T."/>
            <person name="Brosch R."/>
            <person name="Parkhill J."/>
            <person name="Garnier T."/>
            <person name="Churcher C.M."/>
            <person name="Harris D.E."/>
            <person name="Gordon S.V."/>
            <person name="Eiglmeier K."/>
            <person name="Gas S."/>
            <person name="Barry C.E. III"/>
            <person name="Tekaia F."/>
            <person name="Badcock K."/>
            <person name="Basham D."/>
            <person name="Brown D."/>
            <person name="Chillingworth T."/>
            <person name="Connor R."/>
            <person name="Davies R.M."/>
            <person name="Devlin K."/>
            <person name="Feltwell T."/>
            <person name="Gentles S."/>
            <person name="Hamlin N."/>
            <person name="Holroyd S."/>
            <person name="Hornsby T."/>
            <person name="Jagels K."/>
            <person name="Krogh A."/>
            <person name="McLean J."/>
            <person name="Moule S."/>
            <person name="Murphy L.D."/>
            <person name="Oliver S."/>
            <person name="Osborne J."/>
            <person name="Quail M.A."/>
            <person name="Rajandream M.A."/>
            <person name="Rogers J."/>
            <person name="Rutter S."/>
            <person name="Seeger K."/>
            <person name="Skelton S."/>
            <person name="Squares S."/>
            <person name="Squares R."/>
            <person name="Sulston J.E."/>
            <person name="Taylor K."/>
            <person name="Whitehead S."/>
            <person name="Barrell B.G."/>
        </authorList>
    </citation>
    <scope>NUCLEOTIDE SEQUENCE [LARGE SCALE GENOMIC DNA]</scope>
    <source>
        <strain>ATCC 25618 / H37Rv</strain>
    </source>
</reference>
<reference key="2">
    <citation type="journal article" date="2006" name="J. Biol. Chem.">
        <title>Characterization of mRNA interferases from Mycobacterium tuberculosis.</title>
        <authorList>
            <person name="Zhu L."/>
            <person name="Zhang Y."/>
            <person name="Teh J.S."/>
            <person name="Zhang J."/>
            <person name="Connell N."/>
            <person name="Rubin H."/>
            <person name="Inouye M."/>
        </authorList>
    </citation>
    <scope>GENE NAME</scope>
    <scope>POSSIBLE FUNCTION</scope>
    <source>
        <strain>ATCC 25618 / H37Rv</strain>
    </source>
</reference>
<reference key="3">
    <citation type="journal article" date="2009" name="Microbiology">
        <title>Mce3R, a TetR-type transcriptional repressor, controls the expression of a regulon involved in lipid metabolism in Mycobacterium tuberculosis.</title>
        <authorList>
            <person name="de la Paz Santangelo M."/>
            <person name="Klepp L."/>
            <person name="Nunez-Garcia J."/>
            <person name="Blanco F.C."/>
            <person name="Soria M."/>
            <person name="Garcia-Pelayo M.C."/>
            <person name="Bianco M.V."/>
            <person name="Cataldi A.A."/>
            <person name="Golby P."/>
            <person name="Jackson M."/>
            <person name="Gordon S.V."/>
            <person name="Bigi F."/>
        </authorList>
    </citation>
    <scope>INDUCTION</scope>
</reference>
<reference key="4">
    <citation type="journal article" date="2009" name="PLoS Genet.">
        <title>Comprehensive functional analysis of Mycobacterium tuberculosis toxin-antitoxin systems: implications for pathogenesis, stress responses, and evolution.</title>
        <authorList>
            <person name="Ramage H.R."/>
            <person name="Connolly L.E."/>
            <person name="Cox J.S."/>
        </authorList>
    </citation>
    <scope>EXPRESSION IN M.SMEGMATIS</scope>
    <scope>FUNCTION AS A TOXIN</scope>
    <source>
        <strain>ATCC 35801 / TMC 107 / Erdman</strain>
    </source>
</reference>
<reference key="5">
    <citation type="journal article" date="2011" name="Mol. Cell. Proteomics">
        <title>Proteogenomic analysis of Mycobacterium tuberculosis by high resolution mass spectrometry.</title>
        <authorList>
            <person name="Kelkar D.S."/>
            <person name="Kumar D."/>
            <person name="Kumar P."/>
            <person name="Balakrishnan L."/>
            <person name="Muthusamy B."/>
            <person name="Yadav A.K."/>
            <person name="Shrivastava P."/>
            <person name="Marimuthu A."/>
            <person name="Anand S."/>
            <person name="Sundaram H."/>
            <person name="Kingsbury R."/>
            <person name="Harsha H.C."/>
            <person name="Nair B."/>
            <person name="Prasad T.S."/>
            <person name="Chauhan D.S."/>
            <person name="Katoch K."/>
            <person name="Katoch V.M."/>
            <person name="Kumar P."/>
            <person name="Chaerkady R."/>
            <person name="Ramachandran S."/>
            <person name="Dash D."/>
            <person name="Pandey A."/>
        </authorList>
    </citation>
    <scope>IDENTIFICATION BY MASS SPECTROMETRY [LARGE SCALE ANALYSIS]</scope>
    <source>
        <strain>ATCC 25618 / H37Rv</strain>
    </source>
</reference>
<evidence type="ECO:0000250" key="1">
    <source>
        <dbReference type="UniProtKB" id="P9WIH9"/>
    </source>
</evidence>
<evidence type="ECO:0000269" key="2">
    <source>
    </source>
</evidence>
<evidence type="ECO:0000269" key="3">
    <source>
    </source>
</evidence>
<evidence type="ECO:0000303" key="4">
    <source>
    </source>
</evidence>
<evidence type="ECO:0000303" key="5">
    <source>
    </source>
</evidence>
<evidence type="ECO:0000305" key="6"/>